<feature type="chain" id="PRO_0000202370" description="Uncharacterized protein TP_1000">
    <location>
        <begin position="1"/>
        <end position="223"/>
    </location>
</feature>
<sequence>MQAGDTLPFYSNADYQPHRRKGVCSAAHRADVQRGETMMREDVRMHVLRRRISFHYRVDPLKGDSFENNWANNSCDTMQLQDKAGRVLYGAMVQTVANYCFGRMAPGSGVAHGESVAPGAFVVRCFVPARAFHGRIHAITRTWDMDGEWIDREAMQISTEGYQTGRWLIHDRWSEKLGRDTNYAWSAGCFVLSSEDLRRMNEVLDRWGVSCGQEMAGILEELE</sequence>
<name>YA00_TREPA</name>
<proteinExistence type="predicted"/>
<protein>
    <recommendedName>
        <fullName>Uncharacterized protein TP_1000</fullName>
    </recommendedName>
</protein>
<gene>
    <name type="ordered locus">TP_1000</name>
</gene>
<reference key="1">
    <citation type="journal article" date="1998" name="Science">
        <title>Complete genome sequence of Treponema pallidum, the syphilis spirochete.</title>
        <authorList>
            <person name="Fraser C.M."/>
            <person name="Norris S.J."/>
            <person name="Weinstock G.M."/>
            <person name="White O."/>
            <person name="Sutton G.G."/>
            <person name="Dodson R.J."/>
            <person name="Gwinn M.L."/>
            <person name="Hickey E.K."/>
            <person name="Clayton R.A."/>
            <person name="Ketchum K.A."/>
            <person name="Sodergren E."/>
            <person name="Hardham J.M."/>
            <person name="McLeod M.P."/>
            <person name="Salzberg S.L."/>
            <person name="Peterson J.D."/>
            <person name="Khalak H.G."/>
            <person name="Richardson D.L."/>
            <person name="Howell J.K."/>
            <person name="Chidambaram M."/>
            <person name="Utterback T.R."/>
            <person name="McDonald L.A."/>
            <person name="Artiach P."/>
            <person name="Bowman C."/>
            <person name="Cotton M.D."/>
            <person name="Fujii C."/>
            <person name="Garland S.A."/>
            <person name="Hatch B."/>
            <person name="Horst K."/>
            <person name="Roberts K.M."/>
            <person name="Sandusky M."/>
            <person name="Weidman J.F."/>
            <person name="Smith H.O."/>
            <person name="Venter J.C."/>
        </authorList>
    </citation>
    <scope>NUCLEOTIDE SEQUENCE [LARGE SCALE GENOMIC DNA]</scope>
    <source>
        <strain>Nichols</strain>
    </source>
</reference>
<keyword id="KW-1185">Reference proteome</keyword>
<accession>O83965</accession>
<organism>
    <name type="scientific">Treponema pallidum (strain Nichols)</name>
    <dbReference type="NCBI Taxonomy" id="243276"/>
    <lineage>
        <taxon>Bacteria</taxon>
        <taxon>Pseudomonadati</taxon>
        <taxon>Spirochaetota</taxon>
        <taxon>Spirochaetia</taxon>
        <taxon>Spirochaetales</taxon>
        <taxon>Treponemataceae</taxon>
        <taxon>Treponema</taxon>
    </lineage>
</organism>
<dbReference type="EMBL" id="AE000520">
    <property type="protein sequence ID" value="AAC65957.1"/>
    <property type="molecule type" value="Genomic_DNA"/>
</dbReference>
<dbReference type="PIR" id="B71254">
    <property type="entry name" value="B71254"/>
</dbReference>
<dbReference type="RefSeq" id="WP_010882444.1">
    <property type="nucleotide sequence ID" value="NC_021490.2"/>
</dbReference>
<dbReference type="EnsemblBacteria" id="AAC65957">
    <property type="protein sequence ID" value="AAC65957"/>
    <property type="gene ID" value="TP_1000"/>
</dbReference>
<dbReference type="KEGG" id="tpa:TP_1000"/>
<dbReference type="KEGG" id="tpw:TPANIC_1000"/>
<dbReference type="eggNOG" id="ENOG5031UE2">
    <property type="taxonomic scope" value="Bacteria"/>
</dbReference>
<dbReference type="HOGENOM" id="CLU_1495558_0_0_12"/>
<dbReference type="OrthoDB" id="363252at2"/>
<dbReference type="Proteomes" id="UP000000811">
    <property type="component" value="Chromosome"/>
</dbReference>